<reference key="1">
    <citation type="journal article" date="2000" name="Virology">
        <title>Sequence analysis of VP4 and VP7 genes of nontypeable strains identifies a new pair of outer capsid proteins representing novel P and G genotypes in bovine rotaviruses.</title>
        <authorList>
            <person name="Rao C.D."/>
            <person name="Gowda K."/>
            <person name="Reddy B.S."/>
        </authorList>
    </citation>
    <scope>NUCLEOTIDE SEQUENCE [MRNA]</scope>
</reference>
<proteinExistence type="evidence at transcript level"/>
<evidence type="ECO:0000255" key="1">
    <source>
        <dbReference type="HAMAP-Rule" id="MF_04132"/>
    </source>
</evidence>
<organism>
    <name type="scientific">Rotavirus A (isolate RVA/Cow/India/Hg18/2000/G15P[21])</name>
    <name type="common">RV-A</name>
    <dbReference type="NCBI Taxonomy" id="141270"/>
    <lineage>
        <taxon>Viruses</taxon>
        <taxon>Riboviria</taxon>
        <taxon>Orthornavirae</taxon>
        <taxon>Duplornaviricota</taxon>
        <taxon>Resentoviricetes</taxon>
        <taxon>Reovirales</taxon>
        <taxon>Sedoreoviridae</taxon>
        <taxon>Rotavirus</taxon>
        <taxon>Rotavirus A</taxon>
    </lineage>
</organism>
<comment type="function">
    <molecule>Outer capsid protein VP4</molecule>
    <text evidence="1">Spike-forming protein that mediates virion attachment to the host epithelial cell receptors and plays a major role in cell penetration, determination of host range restriction and virulence. Rotavirus attachment and entry into the host cell probably involves multiple sequential contacts between the outer capsid proteins VP4 and VP7, and the cell receptors. It is subsequently lost, together with VP7, following virus entry into the host cell. Following entry into the host cell, low intracellular or intravesicular Ca(2+) concentration probably causes the calcium-stabilized VP7 trimers to dissociate from the virion. This step is probably necessary for the membrane-disrupting entry step and the release of VP4, which is locked onto the virion by VP7. During the virus exit from the host cell, VP4 seems to be required to target the newly formed virions to the host cell lipid rafts.</text>
</comment>
<comment type="function">
    <molecule>Outer capsid protein VP5*</molecule>
    <text evidence="1">Forms the spike 'foot' and 'body' and acts as a membrane permeabilization protein that mediates release of viral particles from endosomal compartments into the cytoplasm. During entry, the part of VP5* that protrudes from the virus folds back on itself and reorganizes from a local dimer to a trimer. This reorganization may be linked to membrane penetration by exposing VP5* hydrophobic region. In integrin-dependent strains, VP5* targets the integrin heterodimer ITGA2/ITGB1 for cell attachment.</text>
</comment>
<comment type="function">
    <molecule>Outer capsid protein VP8*</molecule>
    <text evidence="1">Forms the head of the spikes and mediates the recognition of specific host cell surface glycans. It is the viral hemagglutinin and an important target of neutralizing antibodies. In sialic acid-dependent strains, VP8* binds to host cell sialic acid, most probably a ganglioside, providing the initial contact. In some other strains, VP8* mediates the attachment to histo-blood group antigens (HBGAs) for viral entry.</text>
</comment>
<comment type="subunit">
    <molecule>Outer capsid protein VP4</molecule>
    <text evidence="1">Homotrimer. VP4 adopts a dimeric appearance above the capsid surface, while forming a trimeric base anchored inside the capsid layer. Only hints of the third molecule are observed above the capsid surface. It probably performs a series of molecular rearrangements during viral entry. Prior to trypsin cleavage, it is flexible. The priming trypsin cleavage triggers its rearrangement into rigid spikes with approximate two-fold symmetry of their protruding parts. After an unknown second triggering event, cleaved VP4 may undergo another rearrangement, in which two VP5* subunits fold back on themselves and join a third subunit to form a tightly associated trimer, shaped like a folded umbrella. Interacts with VP6. Interacts with VP7.</text>
</comment>
<comment type="subunit">
    <molecule>Outer capsid protein VP5*</molecule>
    <text evidence="1">Homotrimer. The trimer is coiled-coil stabilized by its C-terminus, however, its N-terminus, known as antigen domain or 'body', seems to be flexible allowing it to self-associate either as a dimer or a trimer.</text>
</comment>
<comment type="subcellular location">
    <molecule>Outer capsid protein VP4</molecule>
    <subcellularLocation>
        <location evidence="1">Virion</location>
    </subcellularLocation>
    <subcellularLocation>
        <location evidence="1">Host rough endoplasmic reticulum</location>
    </subcellularLocation>
    <subcellularLocation>
        <location evidence="1">Host cell membrane</location>
    </subcellularLocation>
    <subcellularLocation>
        <location evidence="1">Host cytoplasm</location>
        <location evidence="1">Host cytoskeleton</location>
    </subcellularLocation>
    <subcellularLocation>
        <location evidence="1">Host endoplasmic reticulum-Golgi intermediate compartment</location>
    </subcellularLocation>
    <text evidence="1">The outer layer contains 180 copies of VP4, grouped as 60 dimers. Immature double-layered particles assembled in the cytoplasm bud across the membrane of the endoplasmic reticulum, acquiring during this process a transient lipid membrane that is modified with the ER resident viral glycoproteins NSP4 and VP7; these enveloped particles also contain VP4. As the particles move towards the interior of the ER cisternae, the transient lipid membrane and the non-structural protein NSP4 are lost, while the virus surface proteins VP4 and VP7 rearrange to form the outermost virus protein layer, yielding mature infectious triple-layered particles. VP4 also seems to associate with lipid rafts of the host cell membrane probably for the exit of the virus from the infected cell by an alternate pathway.</text>
</comment>
<comment type="subcellular location">
    <molecule>Outer capsid protein VP8*</molecule>
    <subcellularLocation>
        <location evidence="1">Virion</location>
    </subcellularLocation>
    <text evidence="1">Outer capsid protein.</text>
</comment>
<comment type="subcellular location">
    <molecule>Outer capsid protein VP5*</molecule>
    <subcellularLocation>
        <location evidence="1">Virion</location>
    </subcellularLocation>
    <text evidence="1">Outer capsid protein.</text>
</comment>
<comment type="domain">
    <molecule>Outer capsid protein VP4</molecule>
    <text evidence="1">The VP4 spike is divided into a foot, a stalk and body, and a head.</text>
</comment>
<comment type="PTM">
    <molecule>Outer capsid protein VP4</molecule>
    <text evidence="1">Proteolytic cleavage by trypsin results in activation of VP4 functions and greatly increases infectivity. The penetration into the host cell is dependent on trypsin treatment of VP4. It produces two peptides, VP5* and VP8* that remain associated with the virion. Cleavage of VP4 by trypsin probably occurs in vivo in the lumen of the intestine prior to infection of enterocytes. Trypsin seems to be incorporated into the three-layered viral particles but remains inactive as long as the viral outer capsid is intact and would only be activated upon the solubilization of the latter.</text>
</comment>
<comment type="miscellaneous">
    <text evidence="1">In group A rotaviruses, VP4 defines the P serotype.</text>
</comment>
<comment type="miscellaneous">
    <text evidence="1">Some rotavirus strains are neuraminidase-sensitive and require sialic acid to attach to the cell surface. Some rotavirus strains are integrin-dependent. Some rotavirus strains depend on ganglioside for their entry into the host cell. Hsp70 also seems to be involved in the entry of some strains.</text>
</comment>
<comment type="similarity">
    <text evidence="1">Belongs to the rotavirus VP4 family.</text>
</comment>
<protein>
    <recommendedName>
        <fullName evidence="1">Outer capsid protein VP4</fullName>
    </recommendedName>
    <alternativeName>
        <fullName evidence="1">Hemagglutinin</fullName>
    </alternativeName>
    <component>
        <recommendedName>
            <fullName evidence="1">Outer capsid protein VP8*</fullName>
        </recommendedName>
    </component>
    <component>
        <recommendedName>
            <fullName evidence="1">Outer capsid protein VP5*</fullName>
        </recommendedName>
    </component>
</protein>
<feature type="chain" id="PRO_0000368089" description="Outer capsid protein VP4" evidence="1">
    <location>
        <begin position="1"/>
        <end position="776"/>
    </location>
</feature>
<feature type="chain" id="PRO_0000368090" description="Outer capsid protein VP8*" evidence="1">
    <location>
        <begin position="1"/>
        <end position="231"/>
    </location>
</feature>
<feature type="chain" id="PRO_0000368091" description="Outer capsid protein VP5*" evidence="1">
    <location>
        <begin position="248"/>
        <end position="776"/>
    </location>
</feature>
<feature type="region of interest" description="Spike head" evidence="1">
    <location>
        <begin position="65"/>
        <end position="224"/>
    </location>
</feature>
<feature type="region of interest" description="Spike body and stalk (antigen domain)" evidence="1">
    <location>
        <begin position="248"/>
        <end position="479"/>
    </location>
</feature>
<feature type="region of interest" description="Hydrophobic; possible role in virus entry into host cell" evidence="1">
    <location>
        <begin position="389"/>
        <end position="409"/>
    </location>
</feature>
<feature type="region of interest" description="Spike foot" evidence="1">
    <location>
        <begin position="510"/>
        <end position="776"/>
    </location>
</feature>
<feature type="coiled-coil region" evidence="1">
    <location>
        <begin position="491"/>
        <end position="511"/>
    </location>
</feature>
<feature type="short sequence motif" description="DGE motif; interaction with ITGA2/ITGB1 heterodimer" evidence="1">
    <location>
        <begin position="308"/>
        <end position="310"/>
    </location>
</feature>
<feature type="short sequence motif" description="YGL motif; interaction with ITGA4" evidence="1">
    <location>
        <begin position="448"/>
        <end position="450"/>
    </location>
</feature>
<feature type="short sequence motif" description="KID motif; interaction with HSPA8" evidence="1">
    <location>
        <begin position="644"/>
        <end position="646"/>
    </location>
</feature>
<feature type="site" description="Cleavage" evidence="1">
    <location>
        <begin position="231"/>
        <end position="232"/>
    </location>
</feature>
<feature type="site" description="Cleavage" evidence="1">
    <location>
        <begin position="241"/>
        <end position="242"/>
    </location>
</feature>
<feature type="site" description="Cleavage; associated with enhancement of infectivity" evidence="1">
    <location>
        <begin position="247"/>
        <end position="248"/>
    </location>
</feature>
<feature type="disulfide bond" evidence="1">
    <location>
        <begin position="203"/>
        <end position="216"/>
    </location>
</feature>
<feature type="disulfide bond" evidence="1">
    <location>
        <begin position="318"/>
        <end position="380"/>
    </location>
</feature>
<dbReference type="EMBL" id="AF237665">
    <property type="protein sequence ID" value="AAG29806.1"/>
    <property type="molecule type" value="mRNA"/>
</dbReference>
<dbReference type="SMR" id="Q9E780"/>
<dbReference type="GO" id="GO:0044172">
    <property type="term" value="C:host cell endoplasmic reticulum-Golgi intermediate compartment"/>
    <property type="evidence" value="ECO:0007669"/>
    <property type="project" value="UniProtKB-SubCell"/>
</dbReference>
<dbReference type="GO" id="GO:0020002">
    <property type="term" value="C:host cell plasma membrane"/>
    <property type="evidence" value="ECO:0007669"/>
    <property type="project" value="UniProtKB-SubCell"/>
</dbReference>
<dbReference type="GO" id="GO:0044168">
    <property type="term" value="C:host cell rough endoplasmic reticulum"/>
    <property type="evidence" value="ECO:0007669"/>
    <property type="project" value="UniProtKB-SubCell"/>
</dbReference>
<dbReference type="GO" id="GO:0044163">
    <property type="term" value="C:host cytoskeleton"/>
    <property type="evidence" value="ECO:0007669"/>
    <property type="project" value="UniProtKB-SubCell"/>
</dbReference>
<dbReference type="GO" id="GO:0016020">
    <property type="term" value="C:membrane"/>
    <property type="evidence" value="ECO:0007669"/>
    <property type="project" value="UniProtKB-KW"/>
</dbReference>
<dbReference type="GO" id="GO:0039624">
    <property type="term" value="C:viral outer capsid"/>
    <property type="evidence" value="ECO:0007669"/>
    <property type="project" value="UniProtKB-UniRule"/>
</dbReference>
<dbReference type="GO" id="GO:0039665">
    <property type="term" value="P:permeabilization of host organelle membrane involved in viral entry into host cell"/>
    <property type="evidence" value="ECO:0007669"/>
    <property type="project" value="UniProtKB-UniRule"/>
</dbReference>
<dbReference type="GO" id="GO:0019062">
    <property type="term" value="P:virion attachment to host cell"/>
    <property type="evidence" value="ECO:0007669"/>
    <property type="project" value="UniProtKB-UniRule"/>
</dbReference>
<dbReference type="Gene3D" id="1.20.5.170">
    <property type="match status" value="1"/>
</dbReference>
<dbReference type="Gene3D" id="2.60.120.200">
    <property type="match status" value="1"/>
</dbReference>
<dbReference type="HAMAP" id="MF_04132">
    <property type="entry name" value="Rota_A_VP4"/>
    <property type="match status" value="1"/>
</dbReference>
<dbReference type="HAMAP" id="MF_04125">
    <property type="entry name" value="Rota_VP4"/>
    <property type="match status" value="1"/>
</dbReference>
<dbReference type="InterPro" id="IPR013320">
    <property type="entry name" value="ConA-like_dom_sf"/>
</dbReference>
<dbReference type="InterPro" id="IPR042546">
    <property type="entry name" value="Rota_A_VP4"/>
</dbReference>
<dbReference type="InterPro" id="IPR035330">
    <property type="entry name" value="Rota_VP4_MID"/>
</dbReference>
<dbReference type="InterPro" id="IPR038017">
    <property type="entry name" value="Rota_VP4_MID_sf"/>
</dbReference>
<dbReference type="InterPro" id="IPR000416">
    <property type="entry name" value="VP4_concanavalin-like"/>
</dbReference>
<dbReference type="InterPro" id="IPR035329">
    <property type="entry name" value="VP4_helical"/>
</dbReference>
<dbReference type="Pfam" id="PF17477">
    <property type="entry name" value="Rota_VP4_MID"/>
    <property type="match status" value="1"/>
</dbReference>
<dbReference type="Pfam" id="PF00426">
    <property type="entry name" value="VP4_haemagglut"/>
    <property type="match status" value="1"/>
</dbReference>
<dbReference type="Pfam" id="PF17478">
    <property type="entry name" value="VP4_helical"/>
    <property type="match status" value="1"/>
</dbReference>
<dbReference type="SUPFAM" id="SSF49899">
    <property type="entry name" value="Concanavalin A-like lectins/glucanases"/>
    <property type="match status" value="1"/>
</dbReference>
<dbReference type="SUPFAM" id="SSF111379">
    <property type="entry name" value="VP4 membrane interaction domain"/>
    <property type="match status" value="1"/>
</dbReference>
<organismHost>
    <name type="scientific">Bos taurus</name>
    <name type="common">Bovine</name>
    <dbReference type="NCBI Taxonomy" id="9913"/>
</organismHost>
<name>VP4_ROT18</name>
<keyword id="KW-0167">Capsid protein</keyword>
<keyword id="KW-0175">Coiled coil</keyword>
<keyword id="KW-1015">Disulfide bond</keyword>
<keyword id="KW-0348">Hemagglutinin</keyword>
<keyword id="KW-1032">Host cell membrane</keyword>
<keyword id="KW-1035">Host cytoplasm</keyword>
<keyword id="KW-1037">Host cytoskeleton</keyword>
<keyword id="KW-1038">Host endoplasmic reticulum</keyword>
<keyword id="KW-1043">Host membrane</keyword>
<keyword id="KW-0945">Host-virus interaction</keyword>
<keyword id="KW-0472">Membrane</keyword>
<keyword id="KW-1152">Outer capsid protein</keyword>
<keyword id="KW-1161">Viral attachment to host cell</keyword>
<keyword id="KW-1162">Viral penetration into host cytoplasm</keyword>
<keyword id="KW-1173">Viral penetration via permeabilization of host membrane</keyword>
<keyword id="KW-0946">Virion</keyword>
<keyword id="KW-1160">Virus entry into host cell</keyword>
<sequence length="776" mass="86745">MGSFIYKQLLTNSYTVELSDEIDAIGSEKTQNVTINPGPFAQTGYAPVEWGAGETNDSTTIEPVLDGPYQPTRFNPEIGYWILLAPETQGIVLETTNTTNKWFATILIEQDVVAESRTYTIFGKTESIQAENTSQTEWKFIDIIKTTQDGTYSQYGPLVLSTKLYGVMKYGGRLYAYIGHTPNATPGHYTIANYDTMEMSIFCEFYIMPRSQEAQCTEYINSGLPPIQNTRNIVPLSLSSRSIKYQKAQVNEDIIISKTSLWKEMQYNIDIIIRFKFNNSIIKSGGLGYKWLEIAFKPANYQYNYIRDGENITAHTTCSVNGVNEFSYNGGSLPTDFAISRYEVIKENSYVYVDYWDDSQAFRNMVYVRSLAANLNTVICNGGDYSFQVPVGQWPVMSGGAVSLQSAGVTLSTQFTDFVSLNSLRFRFSLAVESPPFSITRTRVSNLYGLPAANPNGGRDFYEILGRFSLISLVPSNDDYQTPIMNSVTVRQDLDRQLGELRDEFNALSQQIAMSQLIDLALLPLDMFSMFSGIKGSIDVARSMATKVMKKFRNSKLASSVSTLTDSLSDAASSLSRTSTIRSIGSSASAWTNISSQVDDVISSTSEISTQTSTISRRLRVKEIATQTEGMNFDDISAAVLKAKIDRSTQIDSNTLPDIVTEASEKFIPNRAYRVMDGDEVLEASTDGKFFAYKVETFDEVPFDVQKFADLVTDSPVISAIIDFKTLKNLNDNYGITKAQAFNLLRSDPRVLREFINQENPIIRNRIEQLILQCKL</sequence>
<accession>Q9E780</accession>